<name>DBH1_STRCO</name>
<protein>
    <recommendedName>
        <fullName>DNA-binding protein HU 1</fullName>
    </recommendedName>
    <alternativeName>
        <fullName>HSl</fullName>
    </alternativeName>
</protein>
<feature type="chain" id="PRO_0000104974" description="DNA-binding protein HU 1">
    <location>
        <begin position="1"/>
        <end position="93"/>
    </location>
</feature>
<dbReference type="EMBL" id="AL939114">
    <property type="protein sequence ID" value="CAB72196.1"/>
    <property type="molecule type" value="Genomic_DNA"/>
</dbReference>
<dbReference type="RefSeq" id="NP_627174.1">
    <property type="nucleotide sequence ID" value="NC_003888.3"/>
</dbReference>
<dbReference type="RefSeq" id="WP_003950507.1">
    <property type="nucleotide sequence ID" value="NZ_VNID01000010.1"/>
</dbReference>
<dbReference type="SMR" id="P0A3H5"/>
<dbReference type="STRING" id="100226.gene:17760561"/>
<dbReference type="PaxDb" id="100226-SCO2950"/>
<dbReference type="KEGG" id="sco:SCO2950"/>
<dbReference type="PATRIC" id="fig|100226.15.peg.3009"/>
<dbReference type="eggNOG" id="COG0776">
    <property type="taxonomic scope" value="Bacteria"/>
</dbReference>
<dbReference type="HOGENOM" id="CLU_105066_3_1_11"/>
<dbReference type="InParanoid" id="P0A3H5"/>
<dbReference type="OrthoDB" id="9799835at2"/>
<dbReference type="PhylomeDB" id="P0A3H5"/>
<dbReference type="PRO" id="PR:P0A3H5"/>
<dbReference type="Proteomes" id="UP000001973">
    <property type="component" value="Chromosome"/>
</dbReference>
<dbReference type="GO" id="GO:0005829">
    <property type="term" value="C:cytosol"/>
    <property type="evidence" value="ECO:0000318"/>
    <property type="project" value="GO_Central"/>
</dbReference>
<dbReference type="GO" id="GO:0009295">
    <property type="term" value="C:nucleoid"/>
    <property type="evidence" value="ECO:0007669"/>
    <property type="project" value="UniProtKB-SubCell"/>
</dbReference>
<dbReference type="GO" id="GO:0003677">
    <property type="term" value="F:DNA binding"/>
    <property type="evidence" value="ECO:0000318"/>
    <property type="project" value="GO_Central"/>
</dbReference>
<dbReference type="GO" id="GO:0030527">
    <property type="term" value="F:structural constituent of chromatin"/>
    <property type="evidence" value="ECO:0007669"/>
    <property type="project" value="InterPro"/>
</dbReference>
<dbReference type="GO" id="GO:0030261">
    <property type="term" value="P:chromosome condensation"/>
    <property type="evidence" value="ECO:0007669"/>
    <property type="project" value="UniProtKB-KW"/>
</dbReference>
<dbReference type="CDD" id="cd14435">
    <property type="entry name" value="SPO1_TF1_like"/>
    <property type="match status" value="1"/>
</dbReference>
<dbReference type="FunFam" id="4.10.520.10:FF:000005">
    <property type="entry name" value="Integration host factor"/>
    <property type="match status" value="1"/>
</dbReference>
<dbReference type="Gene3D" id="4.10.520.10">
    <property type="entry name" value="IHF-like DNA-binding proteins"/>
    <property type="match status" value="1"/>
</dbReference>
<dbReference type="InterPro" id="IPR000119">
    <property type="entry name" value="Hist_DNA-bd"/>
</dbReference>
<dbReference type="InterPro" id="IPR020816">
    <property type="entry name" value="Histone-like_DNA-bd_CS"/>
</dbReference>
<dbReference type="InterPro" id="IPR010992">
    <property type="entry name" value="IHF-like_DNA-bd_dom_sf"/>
</dbReference>
<dbReference type="PANTHER" id="PTHR33175">
    <property type="entry name" value="DNA-BINDING PROTEIN HU"/>
    <property type="match status" value="1"/>
</dbReference>
<dbReference type="PANTHER" id="PTHR33175:SF3">
    <property type="entry name" value="DNA-BINDING PROTEIN HU-BETA"/>
    <property type="match status" value="1"/>
</dbReference>
<dbReference type="Pfam" id="PF00216">
    <property type="entry name" value="Bac_DNA_binding"/>
    <property type="match status" value="1"/>
</dbReference>
<dbReference type="PRINTS" id="PR01727">
    <property type="entry name" value="DNABINDINGHU"/>
</dbReference>
<dbReference type="SMART" id="SM00411">
    <property type="entry name" value="BHL"/>
    <property type="match status" value="1"/>
</dbReference>
<dbReference type="SUPFAM" id="SSF47729">
    <property type="entry name" value="IHF-like DNA-binding proteins"/>
    <property type="match status" value="1"/>
</dbReference>
<dbReference type="PROSITE" id="PS00045">
    <property type="entry name" value="HISTONE_LIKE"/>
    <property type="match status" value="1"/>
</dbReference>
<sequence>MNRSELVAALADRAEVTRKDADAVLAAFAEVVGDIVSKGDEKVTIPGFLTFERTHRAARTARNPQTGEPIQIPAGYSVKVSAGSKLKEAAKGK</sequence>
<organism>
    <name type="scientific">Streptomyces coelicolor (strain ATCC BAA-471 / A3(2) / M145)</name>
    <dbReference type="NCBI Taxonomy" id="100226"/>
    <lineage>
        <taxon>Bacteria</taxon>
        <taxon>Bacillati</taxon>
        <taxon>Actinomycetota</taxon>
        <taxon>Actinomycetes</taxon>
        <taxon>Kitasatosporales</taxon>
        <taxon>Streptomycetaceae</taxon>
        <taxon>Streptomyces</taxon>
        <taxon>Streptomyces albidoflavus group</taxon>
    </lineage>
</organism>
<comment type="function">
    <text evidence="1">Histone-like DNA-binding protein which is capable of wrapping DNA to stabilize it, and thus to prevent its denaturation under extreme environmental conditions.</text>
</comment>
<comment type="subunit">
    <text evidence="1">Homodimer.</text>
</comment>
<comment type="subcellular location">
    <subcellularLocation>
        <location evidence="3">Cytoplasm</location>
        <location evidence="3">Nucleoid</location>
    </subcellularLocation>
</comment>
<comment type="similarity">
    <text evidence="2">Belongs to the bacterial histone-like protein family.</text>
</comment>
<evidence type="ECO:0000250" key="1"/>
<evidence type="ECO:0000305" key="2"/>
<evidence type="ECO:0000305" key="3">
    <source>
    </source>
</evidence>
<accession>P0A3H5</accession>
<accession>O06447</accession>
<reference key="1">
    <citation type="journal article" date="2002" name="Nature">
        <title>Complete genome sequence of the model actinomycete Streptomyces coelicolor A3(2).</title>
        <authorList>
            <person name="Bentley S.D."/>
            <person name="Chater K.F."/>
            <person name="Cerdeno-Tarraga A.-M."/>
            <person name="Challis G.L."/>
            <person name="Thomson N.R."/>
            <person name="James K.D."/>
            <person name="Harris D.E."/>
            <person name="Quail M.A."/>
            <person name="Kieser H."/>
            <person name="Harper D."/>
            <person name="Bateman A."/>
            <person name="Brown S."/>
            <person name="Chandra G."/>
            <person name="Chen C.W."/>
            <person name="Collins M."/>
            <person name="Cronin A."/>
            <person name="Fraser A."/>
            <person name="Goble A."/>
            <person name="Hidalgo J."/>
            <person name="Hornsby T."/>
            <person name="Howarth S."/>
            <person name="Huang C.-H."/>
            <person name="Kieser T."/>
            <person name="Larke L."/>
            <person name="Murphy L.D."/>
            <person name="Oliver K."/>
            <person name="O'Neil S."/>
            <person name="Rabbinowitsch E."/>
            <person name="Rajandream M.A."/>
            <person name="Rutherford K.M."/>
            <person name="Rutter S."/>
            <person name="Seeger K."/>
            <person name="Saunders D."/>
            <person name="Sharp S."/>
            <person name="Squares R."/>
            <person name="Squares S."/>
            <person name="Taylor K."/>
            <person name="Warren T."/>
            <person name="Wietzorrek A."/>
            <person name="Woodward J.R."/>
            <person name="Barrell B.G."/>
            <person name="Parkhill J."/>
            <person name="Hopwood D.A."/>
        </authorList>
    </citation>
    <scope>NUCLEOTIDE SEQUENCE [LARGE SCALE GENOMIC DNA]</scope>
    <source>
        <strain>ATCC BAA-471 / A3(2) / M145</strain>
    </source>
</reference>
<reference key="2">
    <citation type="journal article" date="2013" name="J. Proteomics">
        <title>Proteomic survey of the Streptomyces coelicolor nucleoid.</title>
        <authorList>
            <person name="Bradshaw E."/>
            <person name="Saalbach G."/>
            <person name="McArthur M."/>
        </authorList>
    </citation>
    <scope>IDENTIFICATION BY MASS SPECTROMETRY</scope>
    <scope>SUBCELLULAR LOCATION</scope>
    <source>
        <strain>ATCC BAA-471 / A3(2) / M145</strain>
    </source>
</reference>
<gene>
    <name type="primary">hup1</name>
    <name type="synonym">hup</name>
    <name type="ordered locus">SCO2950</name>
    <name type="ORF">SCE59.09</name>
</gene>
<keyword id="KW-0963">Cytoplasm</keyword>
<keyword id="KW-0226">DNA condensation</keyword>
<keyword id="KW-0238">DNA-binding</keyword>
<keyword id="KW-1185">Reference proteome</keyword>
<proteinExistence type="evidence at protein level"/>